<accession>B8IPK9</accession>
<evidence type="ECO:0000255" key="1">
    <source>
        <dbReference type="HAMAP-Rule" id="MF_00409"/>
    </source>
</evidence>
<reference key="1">
    <citation type="submission" date="2009-01" db="EMBL/GenBank/DDBJ databases">
        <title>Complete sequence of chromosome of Methylobacterium nodulans ORS 2060.</title>
        <authorList>
            <consortium name="US DOE Joint Genome Institute"/>
            <person name="Lucas S."/>
            <person name="Copeland A."/>
            <person name="Lapidus A."/>
            <person name="Glavina del Rio T."/>
            <person name="Dalin E."/>
            <person name="Tice H."/>
            <person name="Bruce D."/>
            <person name="Goodwin L."/>
            <person name="Pitluck S."/>
            <person name="Sims D."/>
            <person name="Brettin T."/>
            <person name="Detter J.C."/>
            <person name="Han C."/>
            <person name="Larimer F."/>
            <person name="Land M."/>
            <person name="Hauser L."/>
            <person name="Kyrpides N."/>
            <person name="Ivanova N."/>
            <person name="Marx C.J."/>
            <person name="Richardson P."/>
        </authorList>
    </citation>
    <scope>NUCLEOTIDE SEQUENCE [LARGE SCALE GENOMIC DNA]</scope>
    <source>
        <strain>LMG 21967 / CNCM I-2342 / ORS 2060</strain>
    </source>
</reference>
<gene>
    <name evidence="1" type="primary">lpxK</name>
    <name type="ordered locus">Mnod_7565</name>
</gene>
<protein>
    <recommendedName>
        <fullName evidence="1">Tetraacyldisaccharide 4'-kinase</fullName>
        <ecNumber evidence="1">2.7.1.130</ecNumber>
    </recommendedName>
    <alternativeName>
        <fullName evidence="1">Lipid A 4'-kinase</fullName>
    </alternativeName>
</protein>
<dbReference type="EC" id="2.7.1.130" evidence="1"/>
<dbReference type="EMBL" id="CP001349">
    <property type="protein sequence ID" value="ACL62301.1"/>
    <property type="molecule type" value="Genomic_DNA"/>
</dbReference>
<dbReference type="RefSeq" id="WP_015933855.1">
    <property type="nucleotide sequence ID" value="NC_011894.1"/>
</dbReference>
<dbReference type="SMR" id="B8IPK9"/>
<dbReference type="STRING" id="460265.Mnod_7565"/>
<dbReference type="KEGG" id="mno:Mnod_7565"/>
<dbReference type="eggNOG" id="COG1663">
    <property type="taxonomic scope" value="Bacteria"/>
</dbReference>
<dbReference type="HOGENOM" id="CLU_038816_0_0_5"/>
<dbReference type="OrthoDB" id="9766423at2"/>
<dbReference type="UniPathway" id="UPA00359">
    <property type="reaction ID" value="UER00482"/>
</dbReference>
<dbReference type="Proteomes" id="UP000008207">
    <property type="component" value="Chromosome"/>
</dbReference>
<dbReference type="GO" id="GO:0005886">
    <property type="term" value="C:plasma membrane"/>
    <property type="evidence" value="ECO:0007669"/>
    <property type="project" value="TreeGrafter"/>
</dbReference>
<dbReference type="GO" id="GO:0005524">
    <property type="term" value="F:ATP binding"/>
    <property type="evidence" value="ECO:0007669"/>
    <property type="project" value="UniProtKB-UniRule"/>
</dbReference>
<dbReference type="GO" id="GO:0009029">
    <property type="term" value="F:tetraacyldisaccharide 4'-kinase activity"/>
    <property type="evidence" value="ECO:0007669"/>
    <property type="project" value="UniProtKB-UniRule"/>
</dbReference>
<dbReference type="GO" id="GO:0009245">
    <property type="term" value="P:lipid A biosynthetic process"/>
    <property type="evidence" value="ECO:0007669"/>
    <property type="project" value="UniProtKB-UniRule"/>
</dbReference>
<dbReference type="GO" id="GO:0009244">
    <property type="term" value="P:lipopolysaccharide core region biosynthetic process"/>
    <property type="evidence" value="ECO:0007669"/>
    <property type="project" value="TreeGrafter"/>
</dbReference>
<dbReference type="HAMAP" id="MF_00409">
    <property type="entry name" value="LpxK"/>
    <property type="match status" value="1"/>
</dbReference>
<dbReference type="InterPro" id="IPR003758">
    <property type="entry name" value="LpxK"/>
</dbReference>
<dbReference type="InterPro" id="IPR027417">
    <property type="entry name" value="P-loop_NTPase"/>
</dbReference>
<dbReference type="NCBIfam" id="TIGR00682">
    <property type="entry name" value="lpxK"/>
    <property type="match status" value="1"/>
</dbReference>
<dbReference type="PANTHER" id="PTHR42724">
    <property type="entry name" value="TETRAACYLDISACCHARIDE 4'-KINASE"/>
    <property type="match status" value="1"/>
</dbReference>
<dbReference type="PANTHER" id="PTHR42724:SF1">
    <property type="entry name" value="TETRAACYLDISACCHARIDE 4'-KINASE, MITOCHONDRIAL-RELATED"/>
    <property type="match status" value="1"/>
</dbReference>
<dbReference type="Pfam" id="PF02606">
    <property type="entry name" value="LpxK"/>
    <property type="match status" value="1"/>
</dbReference>
<dbReference type="SUPFAM" id="SSF52540">
    <property type="entry name" value="P-loop containing nucleoside triphosphate hydrolases"/>
    <property type="match status" value="1"/>
</dbReference>
<proteinExistence type="inferred from homology"/>
<keyword id="KW-0067">ATP-binding</keyword>
<keyword id="KW-0418">Kinase</keyword>
<keyword id="KW-0441">Lipid A biosynthesis</keyword>
<keyword id="KW-0444">Lipid biosynthesis</keyword>
<keyword id="KW-0443">Lipid metabolism</keyword>
<keyword id="KW-0547">Nucleotide-binding</keyword>
<keyword id="KW-1185">Reference proteome</keyword>
<keyword id="KW-0808">Transferase</keyword>
<organism>
    <name type="scientific">Methylobacterium nodulans (strain LMG 21967 / CNCM I-2342 / ORS 2060)</name>
    <dbReference type="NCBI Taxonomy" id="460265"/>
    <lineage>
        <taxon>Bacteria</taxon>
        <taxon>Pseudomonadati</taxon>
        <taxon>Pseudomonadota</taxon>
        <taxon>Alphaproteobacteria</taxon>
        <taxon>Hyphomicrobiales</taxon>
        <taxon>Methylobacteriaceae</taxon>
        <taxon>Methylobacterium</taxon>
    </lineage>
</organism>
<feature type="chain" id="PRO_1000134745" description="Tetraacyldisaccharide 4'-kinase">
    <location>
        <begin position="1"/>
        <end position="337"/>
    </location>
</feature>
<feature type="binding site" evidence="1">
    <location>
        <begin position="52"/>
        <end position="59"/>
    </location>
    <ligand>
        <name>ATP</name>
        <dbReference type="ChEBI" id="CHEBI:30616"/>
    </ligand>
</feature>
<comment type="function">
    <text evidence="1">Transfers the gamma-phosphate of ATP to the 4'-position of a tetraacyldisaccharide 1-phosphate intermediate (termed DS-1-P) to form tetraacyldisaccharide 1,4'-bis-phosphate (lipid IVA).</text>
</comment>
<comment type="catalytic activity">
    <reaction evidence="1">
        <text>a lipid A disaccharide + ATP = a lipid IVA + ADP + H(+)</text>
        <dbReference type="Rhea" id="RHEA:67840"/>
        <dbReference type="ChEBI" id="CHEBI:15378"/>
        <dbReference type="ChEBI" id="CHEBI:30616"/>
        <dbReference type="ChEBI" id="CHEBI:176343"/>
        <dbReference type="ChEBI" id="CHEBI:176425"/>
        <dbReference type="ChEBI" id="CHEBI:456216"/>
        <dbReference type="EC" id="2.7.1.130"/>
    </reaction>
</comment>
<comment type="pathway">
    <text evidence="1">Glycolipid biosynthesis; lipid IV(A) biosynthesis; lipid IV(A) from (3R)-3-hydroxytetradecanoyl-[acyl-carrier-protein] and UDP-N-acetyl-alpha-D-glucosamine: step 6/6.</text>
</comment>
<comment type="similarity">
    <text evidence="1">Belongs to the LpxK family.</text>
</comment>
<sequence length="337" mass="34839">MRAPGFWWSVPTALPARLLAPLGRLYGGQVARRMARPGASAPLPVICVGNVTLGGAGKTPTALALAGLLREIGHEPAFLSRGYGGRLPGPVRVDPAQHGAAEVGDEPLLLARAAPTIVARDRPAGAALCAAADATAIIMDDGLQNPSLRKDWSIAVFDAGVGIGNGLAFPAGPLRAPLAAQWPHIDAVLIIGEGPAGEPVAADAVRRGLPVIRAQLRPEPGAAAALAGRPVLAFAGIGRPDKFFESLRAAGAEIRATRAFPDHHAYRAADLAGLERLARREGLTLVTTEKDRVRLPAAAPVTVLPVSLHFSEPDAALLRARLAALGPAPPDPRTRPD</sequence>
<name>LPXK_METNO</name>